<dbReference type="EC" id="6.1.1.11" evidence="1"/>
<dbReference type="EMBL" id="CP001638">
    <property type="protein sequence ID" value="ACS22956.1"/>
    <property type="molecule type" value="Genomic_DNA"/>
</dbReference>
<dbReference type="SMR" id="C5D340"/>
<dbReference type="STRING" id="471223.GWCH70_0014"/>
<dbReference type="KEGG" id="gwc:GWCH70_0014"/>
<dbReference type="eggNOG" id="COG0172">
    <property type="taxonomic scope" value="Bacteria"/>
</dbReference>
<dbReference type="HOGENOM" id="CLU_023797_1_1_9"/>
<dbReference type="OrthoDB" id="9804647at2"/>
<dbReference type="UniPathway" id="UPA00906">
    <property type="reaction ID" value="UER00895"/>
</dbReference>
<dbReference type="GO" id="GO:0005737">
    <property type="term" value="C:cytoplasm"/>
    <property type="evidence" value="ECO:0007669"/>
    <property type="project" value="UniProtKB-SubCell"/>
</dbReference>
<dbReference type="GO" id="GO:0005524">
    <property type="term" value="F:ATP binding"/>
    <property type="evidence" value="ECO:0007669"/>
    <property type="project" value="UniProtKB-UniRule"/>
</dbReference>
<dbReference type="GO" id="GO:0140096">
    <property type="term" value="F:catalytic activity, acting on a protein"/>
    <property type="evidence" value="ECO:0007669"/>
    <property type="project" value="UniProtKB-ARBA"/>
</dbReference>
<dbReference type="GO" id="GO:0004828">
    <property type="term" value="F:serine-tRNA ligase activity"/>
    <property type="evidence" value="ECO:0007669"/>
    <property type="project" value="UniProtKB-UniRule"/>
</dbReference>
<dbReference type="GO" id="GO:0016740">
    <property type="term" value="F:transferase activity"/>
    <property type="evidence" value="ECO:0007669"/>
    <property type="project" value="UniProtKB-ARBA"/>
</dbReference>
<dbReference type="GO" id="GO:0016260">
    <property type="term" value="P:selenocysteine biosynthetic process"/>
    <property type="evidence" value="ECO:0007669"/>
    <property type="project" value="UniProtKB-UniRule"/>
</dbReference>
<dbReference type="GO" id="GO:0006434">
    <property type="term" value="P:seryl-tRNA aminoacylation"/>
    <property type="evidence" value="ECO:0007669"/>
    <property type="project" value="UniProtKB-UniRule"/>
</dbReference>
<dbReference type="CDD" id="cd00770">
    <property type="entry name" value="SerRS_core"/>
    <property type="match status" value="1"/>
</dbReference>
<dbReference type="Gene3D" id="3.30.930.10">
    <property type="entry name" value="Bira Bifunctional Protein, Domain 2"/>
    <property type="match status" value="1"/>
</dbReference>
<dbReference type="Gene3D" id="1.10.287.40">
    <property type="entry name" value="Serine-tRNA synthetase, tRNA binding domain"/>
    <property type="match status" value="1"/>
</dbReference>
<dbReference type="HAMAP" id="MF_00176">
    <property type="entry name" value="Ser_tRNA_synth_type1"/>
    <property type="match status" value="1"/>
</dbReference>
<dbReference type="InterPro" id="IPR002314">
    <property type="entry name" value="aa-tRNA-synt_IIb"/>
</dbReference>
<dbReference type="InterPro" id="IPR006195">
    <property type="entry name" value="aa-tRNA-synth_II"/>
</dbReference>
<dbReference type="InterPro" id="IPR045864">
    <property type="entry name" value="aa-tRNA-synth_II/BPL/LPL"/>
</dbReference>
<dbReference type="InterPro" id="IPR002317">
    <property type="entry name" value="Ser-tRNA-ligase_type_1"/>
</dbReference>
<dbReference type="InterPro" id="IPR015866">
    <property type="entry name" value="Ser-tRNA-synth_1_N"/>
</dbReference>
<dbReference type="InterPro" id="IPR042103">
    <property type="entry name" value="SerRS_1_N_sf"/>
</dbReference>
<dbReference type="InterPro" id="IPR033729">
    <property type="entry name" value="SerRS_core"/>
</dbReference>
<dbReference type="InterPro" id="IPR010978">
    <property type="entry name" value="tRNA-bd_arm"/>
</dbReference>
<dbReference type="NCBIfam" id="TIGR00414">
    <property type="entry name" value="serS"/>
    <property type="match status" value="1"/>
</dbReference>
<dbReference type="PANTHER" id="PTHR43697:SF1">
    <property type="entry name" value="SERINE--TRNA LIGASE"/>
    <property type="match status" value="1"/>
</dbReference>
<dbReference type="PANTHER" id="PTHR43697">
    <property type="entry name" value="SERYL-TRNA SYNTHETASE"/>
    <property type="match status" value="1"/>
</dbReference>
<dbReference type="Pfam" id="PF02403">
    <property type="entry name" value="Seryl_tRNA_N"/>
    <property type="match status" value="1"/>
</dbReference>
<dbReference type="Pfam" id="PF00587">
    <property type="entry name" value="tRNA-synt_2b"/>
    <property type="match status" value="1"/>
</dbReference>
<dbReference type="PIRSF" id="PIRSF001529">
    <property type="entry name" value="Ser-tRNA-synth_IIa"/>
    <property type="match status" value="1"/>
</dbReference>
<dbReference type="PRINTS" id="PR00981">
    <property type="entry name" value="TRNASYNTHSER"/>
</dbReference>
<dbReference type="SUPFAM" id="SSF55681">
    <property type="entry name" value="Class II aaRS and biotin synthetases"/>
    <property type="match status" value="1"/>
</dbReference>
<dbReference type="SUPFAM" id="SSF46589">
    <property type="entry name" value="tRNA-binding arm"/>
    <property type="match status" value="1"/>
</dbReference>
<dbReference type="PROSITE" id="PS50862">
    <property type="entry name" value="AA_TRNA_LIGASE_II"/>
    <property type="match status" value="1"/>
</dbReference>
<accession>C5D340</accession>
<name>SYS_GEOSW</name>
<gene>
    <name evidence="1" type="primary">serS</name>
    <name type="ordered locus">GWCH70_0014</name>
</gene>
<feature type="chain" id="PRO_1000203759" description="Serine--tRNA ligase">
    <location>
        <begin position="1"/>
        <end position="424"/>
    </location>
</feature>
<feature type="binding site" evidence="1">
    <location>
        <begin position="231"/>
        <end position="233"/>
    </location>
    <ligand>
        <name>L-serine</name>
        <dbReference type="ChEBI" id="CHEBI:33384"/>
    </ligand>
</feature>
<feature type="binding site" evidence="1">
    <location>
        <begin position="262"/>
        <end position="264"/>
    </location>
    <ligand>
        <name>ATP</name>
        <dbReference type="ChEBI" id="CHEBI:30616"/>
    </ligand>
</feature>
<feature type="binding site" evidence="1">
    <location>
        <position position="285"/>
    </location>
    <ligand>
        <name>L-serine</name>
        <dbReference type="ChEBI" id="CHEBI:33384"/>
    </ligand>
</feature>
<feature type="binding site" evidence="1">
    <location>
        <begin position="349"/>
        <end position="352"/>
    </location>
    <ligand>
        <name>ATP</name>
        <dbReference type="ChEBI" id="CHEBI:30616"/>
    </ligand>
</feature>
<feature type="binding site" evidence="1">
    <location>
        <position position="385"/>
    </location>
    <ligand>
        <name>L-serine</name>
        <dbReference type="ChEBI" id="CHEBI:33384"/>
    </ligand>
</feature>
<sequence>MLDVKYLRNHFEEVKEKLLKRGEDLTNIDRFEELDKKRRELIAKAEELKNKRNEVSQQIAVLKREKKDADHLIAEMRDVGDRIKTMDDEIRQVEEELNALLLSIPNIPHESVPVGKSEEDNVEVRKWGEPRSFSFEPKPHWDIAEQLGILDFERAAKVTGSRFVFYKGLGARLERALINFMLDVHIEEFGYQEILPPYLVNRASMTGTGQLPKFEEDAFRIETDDYFLIPTAEVPVTNLHRDEILSAEDLPIYYVAYSACFRAEAGSAGRDTRGLIRQHQFNKVELVKFVKPEDSYDELEKLTNQAERILQLLGLPYRVVCLCTGDLGFSSAKTYDIEVWLPSYGTYREISSCSNFEAFQARRANIRFRREPKAKPEYVHTLNGSGLAIGRTVAAILENYQQEDGTVVIPEVLRPYMGNLEVIR</sequence>
<evidence type="ECO:0000255" key="1">
    <source>
        <dbReference type="HAMAP-Rule" id="MF_00176"/>
    </source>
</evidence>
<proteinExistence type="inferred from homology"/>
<comment type="function">
    <text evidence="1">Catalyzes the attachment of serine to tRNA(Ser). Is also able to aminoacylate tRNA(Sec) with serine, to form the misacylated tRNA L-seryl-tRNA(Sec), which will be further converted into selenocysteinyl-tRNA(Sec).</text>
</comment>
<comment type="catalytic activity">
    <reaction evidence="1">
        <text>tRNA(Ser) + L-serine + ATP = L-seryl-tRNA(Ser) + AMP + diphosphate + H(+)</text>
        <dbReference type="Rhea" id="RHEA:12292"/>
        <dbReference type="Rhea" id="RHEA-COMP:9669"/>
        <dbReference type="Rhea" id="RHEA-COMP:9703"/>
        <dbReference type="ChEBI" id="CHEBI:15378"/>
        <dbReference type="ChEBI" id="CHEBI:30616"/>
        <dbReference type="ChEBI" id="CHEBI:33019"/>
        <dbReference type="ChEBI" id="CHEBI:33384"/>
        <dbReference type="ChEBI" id="CHEBI:78442"/>
        <dbReference type="ChEBI" id="CHEBI:78533"/>
        <dbReference type="ChEBI" id="CHEBI:456215"/>
        <dbReference type="EC" id="6.1.1.11"/>
    </reaction>
</comment>
<comment type="catalytic activity">
    <reaction evidence="1">
        <text>tRNA(Sec) + L-serine + ATP = L-seryl-tRNA(Sec) + AMP + diphosphate + H(+)</text>
        <dbReference type="Rhea" id="RHEA:42580"/>
        <dbReference type="Rhea" id="RHEA-COMP:9742"/>
        <dbReference type="Rhea" id="RHEA-COMP:10128"/>
        <dbReference type="ChEBI" id="CHEBI:15378"/>
        <dbReference type="ChEBI" id="CHEBI:30616"/>
        <dbReference type="ChEBI" id="CHEBI:33019"/>
        <dbReference type="ChEBI" id="CHEBI:33384"/>
        <dbReference type="ChEBI" id="CHEBI:78442"/>
        <dbReference type="ChEBI" id="CHEBI:78533"/>
        <dbReference type="ChEBI" id="CHEBI:456215"/>
        <dbReference type="EC" id="6.1.1.11"/>
    </reaction>
</comment>
<comment type="pathway">
    <text evidence="1">Aminoacyl-tRNA biosynthesis; selenocysteinyl-tRNA(Sec) biosynthesis; L-seryl-tRNA(Sec) from L-serine and tRNA(Sec): step 1/1.</text>
</comment>
<comment type="subunit">
    <text evidence="1">Homodimer. The tRNA molecule binds across the dimer.</text>
</comment>
<comment type="subcellular location">
    <subcellularLocation>
        <location evidence="1">Cytoplasm</location>
    </subcellularLocation>
</comment>
<comment type="domain">
    <text evidence="1">Consists of two distinct domains, a catalytic core and a N-terminal extension that is involved in tRNA binding.</text>
</comment>
<comment type="similarity">
    <text evidence="1">Belongs to the class-II aminoacyl-tRNA synthetase family. Type-1 seryl-tRNA synthetase subfamily.</text>
</comment>
<protein>
    <recommendedName>
        <fullName evidence="1">Serine--tRNA ligase</fullName>
        <ecNumber evidence="1">6.1.1.11</ecNumber>
    </recommendedName>
    <alternativeName>
        <fullName evidence="1">Seryl-tRNA synthetase</fullName>
        <shortName evidence="1">SerRS</shortName>
    </alternativeName>
    <alternativeName>
        <fullName evidence="1">Seryl-tRNA(Ser/Sec) synthetase</fullName>
    </alternativeName>
</protein>
<keyword id="KW-0030">Aminoacyl-tRNA synthetase</keyword>
<keyword id="KW-0067">ATP-binding</keyword>
<keyword id="KW-0963">Cytoplasm</keyword>
<keyword id="KW-0436">Ligase</keyword>
<keyword id="KW-0547">Nucleotide-binding</keyword>
<keyword id="KW-0648">Protein biosynthesis</keyword>
<reference key="1">
    <citation type="submission" date="2009-06" db="EMBL/GenBank/DDBJ databases">
        <title>Complete sequence of chromosome of Geopacillus sp. WCH70.</title>
        <authorList>
            <consortium name="US DOE Joint Genome Institute"/>
            <person name="Lucas S."/>
            <person name="Copeland A."/>
            <person name="Lapidus A."/>
            <person name="Glavina del Rio T."/>
            <person name="Dalin E."/>
            <person name="Tice H."/>
            <person name="Bruce D."/>
            <person name="Goodwin L."/>
            <person name="Pitluck S."/>
            <person name="Chertkov O."/>
            <person name="Brettin T."/>
            <person name="Detter J.C."/>
            <person name="Han C."/>
            <person name="Larimer F."/>
            <person name="Land M."/>
            <person name="Hauser L."/>
            <person name="Kyrpides N."/>
            <person name="Mikhailova N."/>
            <person name="Brumm P."/>
            <person name="Mead D.A."/>
            <person name="Richardson P."/>
        </authorList>
    </citation>
    <scope>NUCLEOTIDE SEQUENCE [LARGE SCALE GENOMIC DNA]</scope>
    <source>
        <strain>WCH70</strain>
    </source>
</reference>
<organism>
    <name type="scientific">Geobacillus sp. (strain WCH70)</name>
    <dbReference type="NCBI Taxonomy" id="471223"/>
    <lineage>
        <taxon>Bacteria</taxon>
        <taxon>Bacillati</taxon>
        <taxon>Bacillota</taxon>
        <taxon>Bacilli</taxon>
        <taxon>Bacillales</taxon>
        <taxon>Anoxybacillaceae</taxon>
        <taxon>Geobacillus</taxon>
    </lineage>
</organism>